<protein>
    <recommendedName>
        <fullName>Pyruvate dehydrogenase E1 component subunit beta</fullName>
        <ecNumber>1.2.4.1</ecNumber>
    </recommendedName>
</protein>
<name>ODPB_CYACA</name>
<dbReference type="EC" id="1.2.4.1"/>
<dbReference type="EMBL" id="AF022186">
    <property type="protein sequence ID" value="AAF12898.1"/>
    <property type="molecule type" value="Genomic_DNA"/>
</dbReference>
<dbReference type="RefSeq" id="NP_045196.1">
    <property type="nucleotide sequence ID" value="NC_001840.1"/>
</dbReference>
<dbReference type="SMR" id="Q9TLS3"/>
<dbReference type="GeneID" id="800229"/>
<dbReference type="GO" id="GO:0009507">
    <property type="term" value="C:chloroplast"/>
    <property type="evidence" value="ECO:0007669"/>
    <property type="project" value="UniProtKB-SubCell"/>
</dbReference>
<dbReference type="GO" id="GO:0046872">
    <property type="term" value="F:metal ion binding"/>
    <property type="evidence" value="ECO:0007669"/>
    <property type="project" value="UniProtKB-KW"/>
</dbReference>
<dbReference type="GO" id="GO:0004739">
    <property type="term" value="F:pyruvate dehydrogenase (acetyl-transferring) activity"/>
    <property type="evidence" value="ECO:0007669"/>
    <property type="project" value="UniProtKB-EC"/>
</dbReference>
<dbReference type="CDD" id="cd07036">
    <property type="entry name" value="TPP_PYR_E1-PDHc-beta_like"/>
    <property type="match status" value="1"/>
</dbReference>
<dbReference type="FunFam" id="3.40.50.920:FF:000001">
    <property type="entry name" value="Pyruvate dehydrogenase E1 beta subunit"/>
    <property type="match status" value="1"/>
</dbReference>
<dbReference type="FunFam" id="3.40.50.970:FF:000001">
    <property type="entry name" value="Pyruvate dehydrogenase E1 beta subunit"/>
    <property type="match status" value="1"/>
</dbReference>
<dbReference type="Gene3D" id="3.40.50.920">
    <property type="match status" value="1"/>
</dbReference>
<dbReference type="Gene3D" id="3.40.50.970">
    <property type="match status" value="1"/>
</dbReference>
<dbReference type="InterPro" id="IPR029061">
    <property type="entry name" value="THDP-binding"/>
</dbReference>
<dbReference type="InterPro" id="IPR009014">
    <property type="entry name" value="Transketo_C/PFOR_II"/>
</dbReference>
<dbReference type="InterPro" id="IPR005475">
    <property type="entry name" value="Transketolase-like_Pyr-bd"/>
</dbReference>
<dbReference type="InterPro" id="IPR033248">
    <property type="entry name" value="Transketolase_C"/>
</dbReference>
<dbReference type="NCBIfam" id="NF006667">
    <property type="entry name" value="PRK09212.1"/>
    <property type="match status" value="1"/>
</dbReference>
<dbReference type="PANTHER" id="PTHR43257">
    <property type="entry name" value="PYRUVATE DEHYDROGENASE E1 COMPONENT BETA SUBUNIT"/>
    <property type="match status" value="1"/>
</dbReference>
<dbReference type="PANTHER" id="PTHR43257:SF2">
    <property type="entry name" value="PYRUVATE DEHYDROGENASE E1 COMPONENT SUBUNIT BETA"/>
    <property type="match status" value="1"/>
</dbReference>
<dbReference type="Pfam" id="PF02779">
    <property type="entry name" value="Transket_pyr"/>
    <property type="match status" value="1"/>
</dbReference>
<dbReference type="Pfam" id="PF02780">
    <property type="entry name" value="Transketolase_C"/>
    <property type="match status" value="1"/>
</dbReference>
<dbReference type="SMART" id="SM00861">
    <property type="entry name" value="Transket_pyr"/>
    <property type="match status" value="1"/>
</dbReference>
<dbReference type="SUPFAM" id="SSF52518">
    <property type="entry name" value="Thiamin diphosphate-binding fold (THDP-binding)"/>
    <property type="match status" value="1"/>
</dbReference>
<dbReference type="SUPFAM" id="SSF52922">
    <property type="entry name" value="TK C-terminal domain-like"/>
    <property type="match status" value="1"/>
</dbReference>
<comment type="function">
    <text evidence="1">The pyruvate dehydrogenase complex catalyzes the overall conversion of pyruvate to acetyl-CoA and CO(2). It contains multiple copies of three enzymatic components: pyruvate dehydrogenase (E1), dihydrolipoamide acetyltransferase (E2) and lipoamide dehydrogenase (E3) (By similarity).</text>
</comment>
<comment type="catalytic activity">
    <reaction>
        <text>N(6)-[(R)-lipoyl]-L-lysyl-[protein] + pyruvate + H(+) = N(6)-[(R)-S(8)-acetyldihydrolipoyl]-L-lysyl-[protein] + CO2</text>
        <dbReference type="Rhea" id="RHEA:19189"/>
        <dbReference type="Rhea" id="RHEA-COMP:10474"/>
        <dbReference type="Rhea" id="RHEA-COMP:10478"/>
        <dbReference type="ChEBI" id="CHEBI:15361"/>
        <dbReference type="ChEBI" id="CHEBI:15378"/>
        <dbReference type="ChEBI" id="CHEBI:16526"/>
        <dbReference type="ChEBI" id="CHEBI:83099"/>
        <dbReference type="ChEBI" id="CHEBI:83111"/>
        <dbReference type="EC" id="1.2.4.1"/>
    </reaction>
</comment>
<comment type="cofactor">
    <cofactor evidence="2">
        <name>thiamine diphosphate</name>
        <dbReference type="ChEBI" id="CHEBI:58937"/>
    </cofactor>
</comment>
<comment type="subunit">
    <text evidence="1">Heterodimer of an alpha and a beta chain.</text>
</comment>
<comment type="subcellular location">
    <subcellularLocation>
        <location>Plastid</location>
        <location>Chloroplast</location>
    </subcellularLocation>
</comment>
<evidence type="ECO:0000250" key="1"/>
<evidence type="ECO:0000250" key="2">
    <source>
        <dbReference type="UniProtKB" id="P11177"/>
    </source>
</evidence>
<reference key="1">
    <citation type="journal article" date="2000" name="J. Mol. Evol.">
        <title>The structure and gene repertoire of an ancient red algal plastid genome.</title>
        <authorList>
            <person name="Gloeckner G."/>
            <person name="Rosenthal A."/>
            <person name="Valentin K.-U."/>
        </authorList>
    </citation>
    <scope>NUCLEOTIDE SEQUENCE [LARGE SCALE GENOMIC DNA]</scope>
    <source>
        <strain>RK-1</strain>
    </source>
</reference>
<feature type="chain" id="PRO_0000280107" description="Pyruvate dehydrogenase E1 component subunit beta">
    <location>
        <begin position="1"/>
        <end position="327"/>
    </location>
</feature>
<feature type="binding site" evidence="2">
    <location>
        <position position="60"/>
    </location>
    <ligand>
        <name>thiamine diphosphate</name>
        <dbReference type="ChEBI" id="CHEBI:58937"/>
        <note>ligand shared with alpha subunit</note>
    </ligand>
</feature>
<feature type="binding site" evidence="2">
    <location>
        <position position="113"/>
    </location>
    <ligand>
        <name>K(+)</name>
        <dbReference type="ChEBI" id="CHEBI:29103"/>
        <note>structural</note>
    </ligand>
</feature>
<feature type="binding site" evidence="2">
    <location>
        <position position="161"/>
    </location>
    <ligand>
        <name>K(+)</name>
        <dbReference type="ChEBI" id="CHEBI:29103"/>
        <note>structural</note>
    </ligand>
</feature>
<feature type="binding site" evidence="2">
    <location>
        <position position="162"/>
    </location>
    <ligand>
        <name>K(+)</name>
        <dbReference type="ChEBI" id="CHEBI:29103"/>
        <note>structural</note>
    </ligand>
</feature>
<feature type="binding site" evidence="2">
    <location>
        <position position="164"/>
    </location>
    <ligand>
        <name>K(+)</name>
        <dbReference type="ChEBI" id="CHEBI:29103"/>
        <note>structural</note>
    </ligand>
</feature>
<geneLocation type="chloroplast"/>
<gene>
    <name type="primary">pdhB</name>
    <name type="synonym">odpB</name>
</gene>
<organism>
    <name type="scientific">Cyanidium caldarium</name>
    <name type="common">Red alga</name>
    <dbReference type="NCBI Taxonomy" id="2771"/>
    <lineage>
        <taxon>Eukaryota</taxon>
        <taxon>Rhodophyta</taxon>
        <taxon>Bangiophyceae</taxon>
        <taxon>Cyanidiales</taxon>
        <taxon>Cyanidiaceae</taxon>
        <taxon>Cyanidium</taxon>
    </lineage>
</organism>
<sequence>MSMMFLYEALRAAIDEEMGKDSNVFIVGEDVGHYGGSYKVTKDLHVKYGDLRVLDAPIAENSFTGMAIGAAMTGLRPIVEGMNMGFMLLAFNQISNNLSMLQYTSGGNFNIPVVIRGPGGIGKQLAAEHSQRLESCFQSIPGLQIVACSTAYNAKGLLKSAIIEKKPILFLEHVLLYNLKGFVPDEEYYLPLDKAEVVRSGSDVTIVTYSRMRYHVLAAVEKLVLNGQDPEIIDLISLKPLDLHTISKSIKKTHKIVIVEECAQTGGIAAELISLINTYLYDELDSPAVRLSSKDVPIPYNGNLEKSTLIQPDQIVDVVTNLLQYKT</sequence>
<proteinExistence type="inferred from homology"/>
<accession>Q9TLS3</accession>
<keyword id="KW-0150">Chloroplast</keyword>
<keyword id="KW-0479">Metal-binding</keyword>
<keyword id="KW-0560">Oxidoreductase</keyword>
<keyword id="KW-0934">Plastid</keyword>
<keyword id="KW-0630">Potassium</keyword>
<keyword id="KW-0670">Pyruvate</keyword>
<keyword id="KW-0786">Thiamine pyrophosphate</keyword>